<protein>
    <recommendedName>
        <fullName>Protein translocase subunit SecF</fullName>
    </recommendedName>
</protein>
<proteinExistence type="inferred from homology"/>
<reference key="1">
    <citation type="journal article" date="2011" name="Stand. Genomic Sci.">
        <title>Complete genome sequence of Calditerrivibrio nitroreducens type strain (Yu37-1).</title>
        <authorList>
            <person name="Pitluck S."/>
            <person name="Sikorski J."/>
            <person name="Zeytun A."/>
            <person name="Lapidus A."/>
            <person name="Nolan M."/>
            <person name="Lucas S."/>
            <person name="Hammon N."/>
            <person name="Deshpande S."/>
            <person name="Cheng J.F."/>
            <person name="Tapia R."/>
            <person name="Han C."/>
            <person name="Goodwin L."/>
            <person name="Liolios K."/>
            <person name="Pagani I."/>
            <person name="Ivanova N."/>
            <person name="Mavromatis K."/>
            <person name="Pati A."/>
            <person name="Chen A."/>
            <person name="Palaniappan K."/>
            <person name="Hauser L."/>
            <person name="Chang Y.J."/>
            <person name="Jeffries C.D."/>
            <person name="Detter J.C."/>
            <person name="Brambilla E."/>
            <person name="Djao O.D."/>
            <person name="Rohde M."/>
            <person name="Spring S."/>
            <person name="Goker M."/>
            <person name="Woyke T."/>
            <person name="Bristow J."/>
            <person name="Eisen J.A."/>
            <person name="Markowitz V."/>
            <person name="Hugenholtz P."/>
            <person name="Kyrpides N.C."/>
            <person name="Klenk H.P."/>
            <person name="Land M."/>
        </authorList>
    </citation>
    <scope>NUCLEOTIDE SEQUENCE [LARGE SCALE GENOMIC DNA]</scope>
    <source>
        <strain>DSM 19672 / NBRC 101217 / Yu37-1</strain>
    </source>
</reference>
<keyword id="KW-0997">Cell inner membrane</keyword>
<keyword id="KW-1003">Cell membrane</keyword>
<keyword id="KW-0472">Membrane</keyword>
<keyword id="KW-0653">Protein transport</keyword>
<keyword id="KW-1185">Reference proteome</keyword>
<keyword id="KW-0811">Translocation</keyword>
<keyword id="KW-0812">Transmembrane</keyword>
<keyword id="KW-1133">Transmembrane helix</keyword>
<keyword id="KW-0813">Transport</keyword>
<sequence>MAQFLELIKNDSNIDFLGKAKLFFIISGVLIVISLFLIFTKGLNLGIDFSGGTVIQLKYEKPADLNKLRQGIGNLKIGDVSIQNFGNPEEVLIRLGKTRDIPLEELSKTIRAKLAEIDPNNKFIVERVEQVGPQVGSELQYKAMMALLYANIGVLIYVAIRFELIFAIGAILALVHDVIITLGFLSLTSKEFNLTVVAALLALIGYSLNDTIVVFDRIRERIKATANEKINIKDIMNKSINETLSRTIITSLLTFFTVLSLMIFGGEVINPFAFTLVIGIIVGTYSSIGIASGLVYLIKSLRKR</sequence>
<name>SECF_CALNY</name>
<dbReference type="EMBL" id="CP002347">
    <property type="protein sequence ID" value="ADR19151.1"/>
    <property type="molecule type" value="Genomic_DNA"/>
</dbReference>
<dbReference type="RefSeq" id="WP_013451363.1">
    <property type="nucleotide sequence ID" value="NC_014758.1"/>
</dbReference>
<dbReference type="SMR" id="E4TJ19"/>
<dbReference type="STRING" id="768670.Calni_1243"/>
<dbReference type="KEGG" id="cni:Calni_1243"/>
<dbReference type="eggNOG" id="COG0341">
    <property type="taxonomic scope" value="Bacteria"/>
</dbReference>
<dbReference type="HOGENOM" id="CLU_050012_0_1_0"/>
<dbReference type="OrthoDB" id="9774769at2"/>
<dbReference type="Proteomes" id="UP000007039">
    <property type="component" value="Chromosome"/>
</dbReference>
<dbReference type="GO" id="GO:0005886">
    <property type="term" value="C:plasma membrane"/>
    <property type="evidence" value="ECO:0007669"/>
    <property type="project" value="UniProtKB-SubCell"/>
</dbReference>
<dbReference type="GO" id="GO:0015450">
    <property type="term" value="F:protein-transporting ATPase activity"/>
    <property type="evidence" value="ECO:0007669"/>
    <property type="project" value="InterPro"/>
</dbReference>
<dbReference type="GO" id="GO:0065002">
    <property type="term" value="P:intracellular protein transmembrane transport"/>
    <property type="evidence" value="ECO:0007669"/>
    <property type="project" value="UniProtKB-UniRule"/>
</dbReference>
<dbReference type="GO" id="GO:0006605">
    <property type="term" value="P:protein targeting"/>
    <property type="evidence" value="ECO:0007669"/>
    <property type="project" value="UniProtKB-UniRule"/>
</dbReference>
<dbReference type="GO" id="GO:0043952">
    <property type="term" value="P:protein transport by the Sec complex"/>
    <property type="evidence" value="ECO:0007669"/>
    <property type="project" value="UniProtKB-UniRule"/>
</dbReference>
<dbReference type="FunFam" id="1.20.1640.10:FF:000024">
    <property type="entry name" value="Multifunctional fusion protein"/>
    <property type="match status" value="1"/>
</dbReference>
<dbReference type="Gene3D" id="1.20.1640.10">
    <property type="entry name" value="Multidrug efflux transporter AcrB transmembrane domain"/>
    <property type="match status" value="1"/>
</dbReference>
<dbReference type="HAMAP" id="MF_01464_B">
    <property type="entry name" value="SecF_B"/>
    <property type="match status" value="1"/>
</dbReference>
<dbReference type="InterPro" id="IPR022813">
    <property type="entry name" value="SecD/SecF_arch_bac"/>
</dbReference>
<dbReference type="InterPro" id="IPR022645">
    <property type="entry name" value="SecD/SecF_bac"/>
</dbReference>
<dbReference type="InterPro" id="IPR022646">
    <property type="entry name" value="SecD/SecF_CS"/>
</dbReference>
<dbReference type="InterPro" id="IPR048634">
    <property type="entry name" value="SecD_SecF_C"/>
</dbReference>
<dbReference type="InterPro" id="IPR055344">
    <property type="entry name" value="SecD_SecF_C_bact"/>
</dbReference>
<dbReference type="InterPro" id="IPR005665">
    <property type="entry name" value="SecF_bac"/>
</dbReference>
<dbReference type="NCBIfam" id="TIGR00916">
    <property type="entry name" value="2A0604s01"/>
    <property type="match status" value="1"/>
</dbReference>
<dbReference type="NCBIfam" id="TIGR00966">
    <property type="entry name" value="transloc_SecF"/>
    <property type="match status" value="1"/>
</dbReference>
<dbReference type="PANTHER" id="PTHR30081:SF8">
    <property type="entry name" value="PROTEIN TRANSLOCASE SUBUNIT SECF"/>
    <property type="match status" value="1"/>
</dbReference>
<dbReference type="PANTHER" id="PTHR30081">
    <property type="entry name" value="PROTEIN-EXPORT MEMBRANE PROTEIN SEC"/>
    <property type="match status" value="1"/>
</dbReference>
<dbReference type="Pfam" id="PF07549">
    <property type="entry name" value="Sec_GG"/>
    <property type="match status" value="1"/>
</dbReference>
<dbReference type="Pfam" id="PF02355">
    <property type="entry name" value="SecD_SecF_C"/>
    <property type="match status" value="1"/>
</dbReference>
<dbReference type="PRINTS" id="PR01755">
    <property type="entry name" value="SECFTRNLCASE"/>
</dbReference>
<dbReference type="SUPFAM" id="SSF82866">
    <property type="entry name" value="Multidrug efflux transporter AcrB transmembrane domain"/>
    <property type="match status" value="1"/>
</dbReference>
<evidence type="ECO:0000255" key="1">
    <source>
        <dbReference type="HAMAP-Rule" id="MF_01464"/>
    </source>
</evidence>
<gene>
    <name evidence="1" type="primary">secF</name>
    <name type="ordered locus">Calni_1243</name>
</gene>
<comment type="function">
    <text evidence="1">Part of the Sec protein translocase complex. Interacts with the SecYEG preprotein conducting channel. SecDF uses the proton motive force (PMF) to complete protein translocation after the ATP-dependent function of SecA.</text>
</comment>
<comment type="subunit">
    <text evidence="1">Forms a complex with SecD. Part of the essential Sec protein translocation apparatus which comprises SecA, SecYEG and auxiliary proteins SecDF. Other proteins may also be involved.</text>
</comment>
<comment type="subcellular location">
    <subcellularLocation>
        <location evidence="1">Cell inner membrane</location>
        <topology evidence="1">Multi-pass membrane protein</topology>
    </subcellularLocation>
</comment>
<comment type="similarity">
    <text evidence="1">Belongs to the SecD/SecF family. SecF subfamily.</text>
</comment>
<accession>E4TJ19</accession>
<organism>
    <name type="scientific">Calditerrivibrio nitroreducens (strain DSM 19672 / NBRC 101217 / Yu37-1)</name>
    <dbReference type="NCBI Taxonomy" id="768670"/>
    <lineage>
        <taxon>Bacteria</taxon>
        <taxon>Pseudomonadati</taxon>
        <taxon>Deferribacterota</taxon>
        <taxon>Deferribacteres</taxon>
        <taxon>Deferribacterales</taxon>
        <taxon>Calditerrivibrionaceae</taxon>
    </lineage>
</organism>
<feature type="chain" id="PRO_5000662457" description="Protein translocase subunit SecF">
    <location>
        <begin position="1"/>
        <end position="304"/>
    </location>
</feature>
<feature type="transmembrane region" description="Helical" evidence="1">
    <location>
        <begin position="20"/>
        <end position="40"/>
    </location>
</feature>
<feature type="transmembrane region" description="Helical" evidence="1">
    <location>
        <begin position="143"/>
        <end position="163"/>
    </location>
</feature>
<feature type="transmembrane region" description="Helical" evidence="1">
    <location>
        <begin position="164"/>
        <end position="184"/>
    </location>
</feature>
<feature type="transmembrane region" description="Helical" evidence="1">
    <location>
        <begin position="195"/>
        <end position="215"/>
    </location>
</feature>
<feature type="transmembrane region" description="Helical" evidence="1">
    <location>
        <begin position="244"/>
        <end position="266"/>
    </location>
</feature>
<feature type="transmembrane region" description="Helical" evidence="1">
    <location>
        <begin position="276"/>
        <end position="298"/>
    </location>
</feature>